<name>Y351_MYCPN</name>
<comment type="subcellular location">
    <subcellularLocation>
        <location evidence="1">Cytoplasm</location>
    </subcellularLocation>
</comment>
<comment type="similarity">
    <text evidence="1">Belongs to the TrmK family.</text>
</comment>
<dbReference type="EC" id="2.1.1.-"/>
<dbReference type="EMBL" id="U00089">
    <property type="protein sequence ID" value="AAB96133.1"/>
    <property type="molecule type" value="Genomic_DNA"/>
</dbReference>
<dbReference type="PIR" id="S73811">
    <property type="entry name" value="S73811"/>
</dbReference>
<dbReference type="RefSeq" id="NP_110039.1">
    <property type="nucleotide sequence ID" value="NC_000912.1"/>
</dbReference>
<dbReference type="RefSeq" id="WP_010874707.1">
    <property type="nucleotide sequence ID" value="NZ_OU342337.1"/>
</dbReference>
<dbReference type="SMR" id="P75427"/>
<dbReference type="STRING" id="272634.MPN_351"/>
<dbReference type="EnsemblBacteria" id="AAB96133">
    <property type="protein sequence ID" value="AAB96133"/>
    <property type="gene ID" value="MPN_351"/>
</dbReference>
<dbReference type="KEGG" id="mpn:MPN_351"/>
<dbReference type="PATRIC" id="fig|272634.6.peg.378"/>
<dbReference type="HOGENOM" id="CLU_071037_2_1_14"/>
<dbReference type="OrthoDB" id="5881184at2"/>
<dbReference type="BioCyc" id="MPNE272634:G1GJ3-554-MONOMER"/>
<dbReference type="Proteomes" id="UP000000808">
    <property type="component" value="Chromosome"/>
</dbReference>
<dbReference type="GO" id="GO:0005737">
    <property type="term" value="C:cytoplasm"/>
    <property type="evidence" value="ECO:0007669"/>
    <property type="project" value="UniProtKB-SubCell"/>
</dbReference>
<dbReference type="GO" id="GO:0160105">
    <property type="term" value="F:tRNA (adenine(22)-N1)-methyltransferase activity"/>
    <property type="evidence" value="ECO:0007669"/>
    <property type="project" value="InterPro"/>
</dbReference>
<dbReference type="GO" id="GO:0032259">
    <property type="term" value="P:methylation"/>
    <property type="evidence" value="ECO:0007669"/>
    <property type="project" value="UniProtKB-KW"/>
</dbReference>
<dbReference type="GO" id="GO:0008033">
    <property type="term" value="P:tRNA processing"/>
    <property type="evidence" value="ECO:0007669"/>
    <property type="project" value="UniProtKB-KW"/>
</dbReference>
<dbReference type="Gene3D" id="3.40.50.150">
    <property type="entry name" value="Vaccinia Virus protein VP39"/>
    <property type="match status" value="1"/>
</dbReference>
<dbReference type="InterPro" id="IPR029063">
    <property type="entry name" value="SAM-dependent_MTases_sf"/>
</dbReference>
<dbReference type="InterPro" id="IPR006901">
    <property type="entry name" value="TrmK"/>
</dbReference>
<dbReference type="PANTHER" id="PTHR38451">
    <property type="entry name" value="TRNA (ADENINE(22)-N(1))-METHYLTRANSFERASE"/>
    <property type="match status" value="1"/>
</dbReference>
<dbReference type="PANTHER" id="PTHR38451:SF1">
    <property type="entry name" value="TRNA (ADENINE(22)-N(1))-METHYLTRANSFERASE"/>
    <property type="match status" value="1"/>
</dbReference>
<dbReference type="Pfam" id="PF04816">
    <property type="entry name" value="TrmK"/>
    <property type="match status" value="1"/>
</dbReference>
<dbReference type="SUPFAM" id="SSF53335">
    <property type="entry name" value="S-adenosyl-L-methionine-dependent methyltransferases"/>
    <property type="match status" value="1"/>
</dbReference>
<proteinExistence type="inferred from homology"/>
<reference key="1">
    <citation type="journal article" date="1996" name="Nucleic Acids Res.">
        <title>Complete sequence analysis of the genome of the bacterium Mycoplasma pneumoniae.</title>
        <authorList>
            <person name="Himmelreich R."/>
            <person name="Hilbert H."/>
            <person name="Plagens H."/>
            <person name="Pirkl E."/>
            <person name="Li B.-C."/>
            <person name="Herrmann R."/>
        </authorList>
    </citation>
    <scope>NUCLEOTIDE SEQUENCE [LARGE SCALE GENOMIC DNA]</scope>
    <source>
        <strain>ATCC 29342 / M129 / Subtype 1</strain>
    </source>
</reference>
<organism>
    <name type="scientific">Mycoplasma pneumoniae (strain ATCC 29342 / M129 / Subtype 1)</name>
    <name type="common">Mycoplasmoides pneumoniae</name>
    <dbReference type="NCBI Taxonomy" id="272634"/>
    <lineage>
        <taxon>Bacteria</taxon>
        <taxon>Bacillati</taxon>
        <taxon>Mycoplasmatota</taxon>
        <taxon>Mycoplasmoidales</taxon>
        <taxon>Mycoplasmoidaceae</taxon>
        <taxon>Mycoplasmoides</taxon>
    </lineage>
</organism>
<evidence type="ECO:0000305" key="1"/>
<protein>
    <recommendedName>
        <fullName>Putative tRNA methyltransferase MPN_351</fullName>
        <ecNumber>2.1.1.-</ecNumber>
    </recommendedName>
</protein>
<accession>P75427</accession>
<gene>
    <name type="ordered locus">MPN_351</name>
    <name type="ORF">H91_orf213</name>
    <name type="ORF">MP485</name>
</gene>
<feature type="chain" id="PRO_0000210488" description="Putative tRNA methyltransferase MPN_351">
    <location>
        <begin position="1"/>
        <end position="213"/>
    </location>
</feature>
<keyword id="KW-0963">Cytoplasm</keyword>
<keyword id="KW-0489">Methyltransferase</keyword>
<keyword id="KW-1185">Reference proteome</keyword>
<keyword id="KW-0949">S-adenosyl-L-methionine</keyword>
<keyword id="KW-0808">Transferase</keyword>
<keyword id="KW-0819">tRNA processing</keyword>
<sequence length="213" mass="23943">MKRRISTIANLVLQQKPKAFYDIGCDHGYLARELVQQNPSLVGVNSDISANALGAAKGLLKDHTNMHFITSDGFDLLPNLNLDPAVGVIAGLGGLKIMQILAQHNNFLKHFVLQPQSNIIELRRFLSANQWTITTETLVEERGFIYLVLAVDKTKAQTQYLTEEQMILGPHLVNFTDKQMLVKYYNGLLKNFTARLNPSQFDSQVIHVLNKII</sequence>